<gene>
    <name evidence="1" type="primary">kdpC</name>
    <name type="ordered locus">AZC_1567</name>
</gene>
<keyword id="KW-0067">ATP-binding</keyword>
<keyword id="KW-0997">Cell inner membrane</keyword>
<keyword id="KW-1003">Cell membrane</keyword>
<keyword id="KW-0406">Ion transport</keyword>
<keyword id="KW-0472">Membrane</keyword>
<keyword id="KW-0547">Nucleotide-binding</keyword>
<keyword id="KW-0630">Potassium</keyword>
<keyword id="KW-0633">Potassium transport</keyword>
<keyword id="KW-1185">Reference proteome</keyword>
<keyword id="KW-0812">Transmembrane</keyword>
<keyword id="KW-1133">Transmembrane helix</keyword>
<keyword id="KW-0813">Transport</keyword>
<comment type="function">
    <text evidence="1">Part of the high-affinity ATP-driven potassium transport (or Kdp) system, which catalyzes the hydrolysis of ATP coupled with the electrogenic transport of potassium into the cytoplasm. This subunit acts as a catalytic chaperone that increases the ATP-binding affinity of the ATP-hydrolyzing subunit KdpB by the formation of a transient KdpB/KdpC/ATP ternary complex.</text>
</comment>
<comment type="subunit">
    <text evidence="1">The system is composed of three essential subunits: KdpA, KdpB and KdpC.</text>
</comment>
<comment type="subcellular location">
    <subcellularLocation>
        <location evidence="1">Cell inner membrane</location>
        <topology evidence="1">Single-pass membrane protein</topology>
    </subcellularLocation>
</comment>
<comment type="similarity">
    <text evidence="1">Belongs to the KdpC family.</text>
</comment>
<name>KDPC_AZOC5</name>
<protein>
    <recommendedName>
        <fullName evidence="1">Potassium-transporting ATPase KdpC subunit</fullName>
    </recommendedName>
    <alternativeName>
        <fullName evidence="1">ATP phosphohydrolase [potassium-transporting] C chain</fullName>
    </alternativeName>
    <alternativeName>
        <fullName evidence="1">Potassium-binding and translocating subunit C</fullName>
    </alternativeName>
    <alternativeName>
        <fullName evidence="1">Potassium-translocating ATPase C chain</fullName>
    </alternativeName>
</protein>
<feature type="chain" id="PRO_1000071927" description="Potassium-transporting ATPase KdpC subunit">
    <location>
        <begin position="1"/>
        <end position="188"/>
    </location>
</feature>
<feature type="transmembrane region" description="Helical" evidence="1">
    <location>
        <begin position="11"/>
        <end position="31"/>
    </location>
</feature>
<dbReference type="EMBL" id="AP009384">
    <property type="protein sequence ID" value="BAF87565.1"/>
    <property type="molecule type" value="Genomic_DNA"/>
</dbReference>
<dbReference type="RefSeq" id="WP_012170095.1">
    <property type="nucleotide sequence ID" value="NC_009937.1"/>
</dbReference>
<dbReference type="SMR" id="A8HY21"/>
<dbReference type="STRING" id="438753.AZC_1567"/>
<dbReference type="KEGG" id="azc:AZC_1567"/>
<dbReference type="eggNOG" id="COG2156">
    <property type="taxonomic scope" value="Bacteria"/>
</dbReference>
<dbReference type="HOGENOM" id="CLU_077094_2_0_5"/>
<dbReference type="Proteomes" id="UP000000270">
    <property type="component" value="Chromosome"/>
</dbReference>
<dbReference type="GO" id="GO:0005886">
    <property type="term" value="C:plasma membrane"/>
    <property type="evidence" value="ECO:0007669"/>
    <property type="project" value="UniProtKB-SubCell"/>
</dbReference>
<dbReference type="GO" id="GO:0005524">
    <property type="term" value="F:ATP binding"/>
    <property type="evidence" value="ECO:0007669"/>
    <property type="project" value="UniProtKB-UniRule"/>
</dbReference>
<dbReference type="GO" id="GO:0008556">
    <property type="term" value="F:P-type potassium transmembrane transporter activity"/>
    <property type="evidence" value="ECO:0007669"/>
    <property type="project" value="InterPro"/>
</dbReference>
<dbReference type="HAMAP" id="MF_00276">
    <property type="entry name" value="KdpC"/>
    <property type="match status" value="1"/>
</dbReference>
<dbReference type="InterPro" id="IPR003820">
    <property type="entry name" value="KdpC"/>
</dbReference>
<dbReference type="NCBIfam" id="TIGR00681">
    <property type="entry name" value="kdpC"/>
    <property type="match status" value="1"/>
</dbReference>
<dbReference type="NCBIfam" id="NF001454">
    <property type="entry name" value="PRK00315.1"/>
    <property type="match status" value="1"/>
</dbReference>
<dbReference type="PANTHER" id="PTHR30042">
    <property type="entry name" value="POTASSIUM-TRANSPORTING ATPASE C CHAIN"/>
    <property type="match status" value="1"/>
</dbReference>
<dbReference type="PANTHER" id="PTHR30042:SF2">
    <property type="entry name" value="POTASSIUM-TRANSPORTING ATPASE KDPC SUBUNIT"/>
    <property type="match status" value="1"/>
</dbReference>
<dbReference type="Pfam" id="PF02669">
    <property type="entry name" value="KdpC"/>
    <property type="match status" value="1"/>
</dbReference>
<dbReference type="PIRSF" id="PIRSF001296">
    <property type="entry name" value="K_ATPase_KdpC"/>
    <property type="match status" value="1"/>
</dbReference>
<accession>A8HY21</accession>
<proteinExistence type="inferred from homology"/>
<reference key="1">
    <citation type="submission" date="2007-04" db="EMBL/GenBank/DDBJ databases">
        <title>Complete genome sequence of the nitrogen-fixing bacterium Azorhizobium caulinodans ORS571.</title>
        <authorList>
            <person name="Lee K.B."/>
            <person name="Backer P.D."/>
            <person name="Aono T."/>
            <person name="Liu C.T."/>
            <person name="Suzuki S."/>
            <person name="Suzuki T."/>
            <person name="Kaneko T."/>
            <person name="Yamada M."/>
            <person name="Tabata S."/>
            <person name="Kupfer D.M."/>
            <person name="Najar F.Z."/>
            <person name="Wiley G.B."/>
            <person name="Roe B."/>
            <person name="Binnewies T."/>
            <person name="Ussery D."/>
            <person name="Vereecke D."/>
            <person name="Gevers D."/>
            <person name="Holsters M."/>
            <person name="Oyaizu H."/>
        </authorList>
    </citation>
    <scope>NUCLEOTIDE SEQUENCE [LARGE SCALE GENOMIC DNA]</scope>
    <source>
        <strain>ATCC 43989 / DSM 5975 / JCM 20966 / LMG 6465 / NBRC 14845 / NCIMB 13405 / ORS 571</strain>
    </source>
</reference>
<organism>
    <name type="scientific">Azorhizobium caulinodans (strain ATCC 43989 / DSM 5975 / JCM 20966 / LMG 6465 / NBRC 14845 / NCIMB 13405 / ORS 571)</name>
    <dbReference type="NCBI Taxonomy" id="438753"/>
    <lineage>
        <taxon>Bacteria</taxon>
        <taxon>Pseudomonadati</taxon>
        <taxon>Pseudomonadota</taxon>
        <taxon>Alphaproteobacteria</taxon>
        <taxon>Hyphomicrobiales</taxon>
        <taxon>Xanthobacteraceae</taxon>
        <taxon>Azorhizobium</taxon>
    </lineage>
</organism>
<evidence type="ECO:0000255" key="1">
    <source>
        <dbReference type="HAMAP-Rule" id="MF_00276"/>
    </source>
</evidence>
<sequence>MLSQIRPAITLLVAFTLLTGVAYPLAITGIGQTLFPSAANGSLVTRGGTVVGSLLIGQKTTGEGYFHPRPSAAGDAGYDAANSSGSNLAPTSQKLKARITADVAALREAGATGLIAADAVTTSGSGLDPHISPAFAYEQVERVAKARNLPETQVQTLVAGLVEGRDLGLFGEPRVNVLKLNLALDTLK</sequence>